<proteinExistence type="inferred from homology"/>
<name>ACP_LACJO</name>
<accession>Q74IP1</accession>
<sequence length="80" mass="9216">MTEEEIFNKIADMISERFSIDRDKITKDLNFQNDLDADSIDFVELVMDLEDTFGAEIPDDDAEKLQTVGEAVEYIKSHQN</sequence>
<keyword id="KW-0963">Cytoplasm</keyword>
<keyword id="KW-0275">Fatty acid biosynthesis</keyword>
<keyword id="KW-0276">Fatty acid metabolism</keyword>
<keyword id="KW-0444">Lipid biosynthesis</keyword>
<keyword id="KW-0443">Lipid metabolism</keyword>
<keyword id="KW-0596">Phosphopantetheine</keyword>
<keyword id="KW-0597">Phosphoprotein</keyword>
<organism>
    <name type="scientific">Lactobacillus johnsonii (strain CNCM I-12250 / La1 / NCC 533)</name>
    <dbReference type="NCBI Taxonomy" id="257314"/>
    <lineage>
        <taxon>Bacteria</taxon>
        <taxon>Bacillati</taxon>
        <taxon>Bacillota</taxon>
        <taxon>Bacilli</taxon>
        <taxon>Lactobacillales</taxon>
        <taxon>Lactobacillaceae</taxon>
        <taxon>Lactobacillus</taxon>
    </lineage>
</organism>
<reference key="1">
    <citation type="journal article" date="2004" name="Proc. Natl. Acad. Sci. U.S.A.">
        <title>The genome sequence of the probiotic intestinal bacterium Lactobacillus johnsonii NCC 533.</title>
        <authorList>
            <person name="Pridmore R.D."/>
            <person name="Berger B."/>
            <person name="Desiere F."/>
            <person name="Vilanova D."/>
            <person name="Barretto C."/>
            <person name="Pittet A.-C."/>
            <person name="Zwahlen M.-C."/>
            <person name="Rouvet M."/>
            <person name="Altermann E."/>
            <person name="Barrangou R."/>
            <person name="Mollet B."/>
            <person name="Mercenier A."/>
            <person name="Klaenhammer T."/>
            <person name="Arigoni F."/>
            <person name="Schell M.A."/>
        </authorList>
    </citation>
    <scope>NUCLEOTIDE SEQUENCE [LARGE SCALE GENOMIC DNA]</scope>
    <source>
        <strain>CNCM I-1225 / La1 / NCC 533</strain>
    </source>
</reference>
<dbReference type="EMBL" id="AE017198">
    <property type="protein sequence ID" value="AAS09296.1"/>
    <property type="molecule type" value="Genomic_DNA"/>
</dbReference>
<dbReference type="RefSeq" id="WP_004895326.1">
    <property type="nucleotide sequence ID" value="NC_005362.1"/>
</dbReference>
<dbReference type="SMR" id="Q74IP1"/>
<dbReference type="GeneID" id="83570145"/>
<dbReference type="KEGG" id="ljo:LJ_1528"/>
<dbReference type="eggNOG" id="COG0236">
    <property type="taxonomic scope" value="Bacteria"/>
</dbReference>
<dbReference type="HOGENOM" id="CLU_108696_5_1_9"/>
<dbReference type="UniPathway" id="UPA00094"/>
<dbReference type="Proteomes" id="UP000000581">
    <property type="component" value="Chromosome"/>
</dbReference>
<dbReference type="GO" id="GO:0005829">
    <property type="term" value="C:cytosol"/>
    <property type="evidence" value="ECO:0007669"/>
    <property type="project" value="TreeGrafter"/>
</dbReference>
<dbReference type="GO" id="GO:0016020">
    <property type="term" value="C:membrane"/>
    <property type="evidence" value="ECO:0007669"/>
    <property type="project" value="GOC"/>
</dbReference>
<dbReference type="GO" id="GO:0000035">
    <property type="term" value="F:acyl binding"/>
    <property type="evidence" value="ECO:0007669"/>
    <property type="project" value="TreeGrafter"/>
</dbReference>
<dbReference type="GO" id="GO:0000036">
    <property type="term" value="F:acyl carrier activity"/>
    <property type="evidence" value="ECO:0007669"/>
    <property type="project" value="UniProtKB-UniRule"/>
</dbReference>
<dbReference type="GO" id="GO:0009245">
    <property type="term" value="P:lipid A biosynthetic process"/>
    <property type="evidence" value="ECO:0007669"/>
    <property type="project" value="TreeGrafter"/>
</dbReference>
<dbReference type="Gene3D" id="1.10.1200.10">
    <property type="entry name" value="ACP-like"/>
    <property type="match status" value="1"/>
</dbReference>
<dbReference type="HAMAP" id="MF_01217">
    <property type="entry name" value="Acyl_carrier"/>
    <property type="match status" value="1"/>
</dbReference>
<dbReference type="InterPro" id="IPR003231">
    <property type="entry name" value="ACP"/>
</dbReference>
<dbReference type="InterPro" id="IPR036736">
    <property type="entry name" value="ACP-like_sf"/>
</dbReference>
<dbReference type="InterPro" id="IPR009081">
    <property type="entry name" value="PP-bd_ACP"/>
</dbReference>
<dbReference type="NCBIfam" id="TIGR00517">
    <property type="entry name" value="acyl_carrier"/>
    <property type="match status" value="1"/>
</dbReference>
<dbReference type="NCBIfam" id="NF002148">
    <property type="entry name" value="PRK00982.1-2"/>
    <property type="match status" value="1"/>
</dbReference>
<dbReference type="NCBIfam" id="NF002150">
    <property type="entry name" value="PRK00982.1-4"/>
    <property type="match status" value="1"/>
</dbReference>
<dbReference type="NCBIfam" id="NF009104">
    <property type="entry name" value="PRK12449.1"/>
    <property type="match status" value="1"/>
</dbReference>
<dbReference type="PANTHER" id="PTHR20863">
    <property type="entry name" value="ACYL CARRIER PROTEIN"/>
    <property type="match status" value="1"/>
</dbReference>
<dbReference type="PANTHER" id="PTHR20863:SF76">
    <property type="entry name" value="CARRIER DOMAIN-CONTAINING PROTEIN"/>
    <property type="match status" value="1"/>
</dbReference>
<dbReference type="Pfam" id="PF00550">
    <property type="entry name" value="PP-binding"/>
    <property type="match status" value="1"/>
</dbReference>
<dbReference type="SUPFAM" id="SSF47336">
    <property type="entry name" value="ACP-like"/>
    <property type="match status" value="1"/>
</dbReference>
<dbReference type="PROSITE" id="PS50075">
    <property type="entry name" value="CARRIER"/>
    <property type="match status" value="1"/>
</dbReference>
<gene>
    <name evidence="1" type="primary">acpP</name>
    <name type="ordered locus">LJ_1528</name>
</gene>
<comment type="function">
    <text evidence="1">Carrier of the growing fatty acid chain in fatty acid biosynthesis.</text>
</comment>
<comment type="pathway">
    <text evidence="1">Lipid metabolism; fatty acid biosynthesis.</text>
</comment>
<comment type="subcellular location">
    <subcellularLocation>
        <location evidence="1">Cytoplasm</location>
    </subcellularLocation>
</comment>
<comment type="PTM">
    <text evidence="1">4'-phosphopantetheine is transferred from CoA to a specific serine of apo-ACP by AcpS. This modification is essential for activity because fatty acids are bound in thioester linkage to the sulfhydryl of the prosthetic group.</text>
</comment>
<comment type="similarity">
    <text evidence="1">Belongs to the acyl carrier protein (ACP) family.</text>
</comment>
<protein>
    <recommendedName>
        <fullName evidence="1">Acyl carrier protein</fullName>
        <shortName evidence="1">ACP</shortName>
    </recommendedName>
</protein>
<feature type="chain" id="PRO_1000073125" description="Acyl carrier protein">
    <location>
        <begin position="1"/>
        <end position="80"/>
    </location>
</feature>
<feature type="domain" description="Carrier" evidence="2">
    <location>
        <begin position="1"/>
        <end position="79"/>
    </location>
</feature>
<feature type="modified residue" description="O-(pantetheine 4'-phosphoryl)serine" evidence="2">
    <location>
        <position position="39"/>
    </location>
</feature>
<evidence type="ECO:0000255" key="1">
    <source>
        <dbReference type="HAMAP-Rule" id="MF_01217"/>
    </source>
</evidence>
<evidence type="ECO:0000255" key="2">
    <source>
        <dbReference type="PROSITE-ProRule" id="PRU00258"/>
    </source>
</evidence>